<keyword id="KW-0007">Acetylation</keyword>
<keyword id="KW-0158">Chromosome</keyword>
<keyword id="KW-0238">DNA-binding</keyword>
<keyword id="KW-1017">Isopeptide bond</keyword>
<keyword id="KW-0544">Nucleosome core</keyword>
<keyword id="KW-0539">Nucleus</keyword>
<keyword id="KW-1185">Reference proteome</keyword>
<keyword id="KW-0832">Ubl conjugation</keyword>
<sequence length="151" mass="16420">MAPKAEKKPAAKKPAEEEPATEKVEKAPAGKKPKAEKRLPAGKSKEGGEGKKGKKKAKKSVETYKIYIFKVLKQVHPDIGISSKAMSIMNSFINDIFEKLAAESAKLARYNKKPTITSREIQTSVRLVLPGELAKHAVSEGTKAVTKFTSS</sequence>
<feature type="initiator methionine" description="Removed" evidence="1">
    <location>
        <position position="1"/>
    </location>
</feature>
<feature type="chain" id="PRO_0000071915" description="Histone H2B.1">
    <location>
        <begin position="2"/>
        <end position="151"/>
    </location>
</feature>
<feature type="region of interest" description="Disordered" evidence="2">
    <location>
        <begin position="1"/>
        <end position="58"/>
    </location>
</feature>
<feature type="compositionally biased region" description="Basic and acidic residues" evidence="2">
    <location>
        <begin position="1"/>
        <end position="28"/>
    </location>
</feature>
<feature type="compositionally biased region" description="Basic and acidic residues" evidence="2">
    <location>
        <begin position="36"/>
        <end position="51"/>
    </location>
</feature>
<feature type="modified residue" description="N6-acetyllysine" evidence="1">
    <location>
        <position position="7"/>
    </location>
</feature>
<feature type="modified residue" description="N6-acetyllysine" evidence="1">
    <location>
        <position position="37"/>
    </location>
</feature>
<feature type="cross-link" description="Glycyl lysine isopeptide (Lys-Gly) (interchain with G-Cter in ubiquitin)" evidence="1">
    <location>
        <position position="147"/>
    </location>
</feature>
<reference key="1">
    <citation type="journal article" date="1992" name="Plant Mol. Biol.">
        <title>Nucleotide sequence and expression of two cDNA coding for two histone H2B variants of maize.</title>
        <authorList>
            <person name="Joanin P."/>
            <person name="Gigot C."/>
            <person name="Phillipps G."/>
        </authorList>
    </citation>
    <scope>NUCLEOTIDE SEQUENCE [MRNA]</scope>
    <source>
        <strain>cv. Wisconsin 22</strain>
    </source>
</reference>
<name>H2B1_MAIZE</name>
<proteinExistence type="evidence at transcript level"/>
<organism>
    <name type="scientific">Zea mays</name>
    <name type="common">Maize</name>
    <dbReference type="NCBI Taxonomy" id="4577"/>
    <lineage>
        <taxon>Eukaryota</taxon>
        <taxon>Viridiplantae</taxon>
        <taxon>Streptophyta</taxon>
        <taxon>Embryophyta</taxon>
        <taxon>Tracheophyta</taxon>
        <taxon>Spermatophyta</taxon>
        <taxon>Magnoliopsida</taxon>
        <taxon>Liliopsida</taxon>
        <taxon>Poales</taxon>
        <taxon>Poaceae</taxon>
        <taxon>PACMAD clade</taxon>
        <taxon>Panicoideae</taxon>
        <taxon>Andropogonodae</taxon>
        <taxon>Andropogoneae</taxon>
        <taxon>Tripsacinae</taxon>
        <taxon>Zea</taxon>
    </lineage>
</organism>
<accession>P30755</accession>
<protein>
    <recommendedName>
        <fullName>Histone H2B.1</fullName>
    </recommendedName>
</protein>
<comment type="function">
    <text>Core component of nucleosome. Nucleosomes wrap and compact DNA into chromatin, limiting DNA accessibility to the cellular machineries which require DNA as a template. Histones thereby play a central role in transcription regulation, DNA repair, DNA replication and chromosomal stability. DNA accessibility is regulated via a complex set of post-translational modifications of histones, also called histone code, and nucleosome remodeling.</text>
</comment>
<comment type="subunit">
    <text>The nucleosome is a histone octamer containing two molecules each of H2A, H2B, H3 and H4 assembled in one H3-H4 heterotetramer and two H2A-H2B heterodimers. The octamer wraps approximately 147 bp of DNA.</text>
</comment>
<comment type="subcellular location">
    <subcellularLocation>
        <location>Nucleus</location>
    </subcellularLocation>
    <subcellularLocation>
        <location>Chromosome</location>
    </subcellularLocation>
</comment>
<comment type="PTM">
    <text evidence="1">Can be acetylated to form H2BK6ac and H2BK33ac.</text>
</comment>
<comment type="PTM">
    <text evidence="1">Monoubiquitinated to form H2BK143ub1; may give a specific tag for epigenetic transcriptional activation.</text>
</comment>
<comment type="similarity">
    <text evidence="3">Belongs to the histone H2B family.</text>
</comment>
<comment type="caution">
    <text evidence="3">To ensure consistency between histone entries, we follow the 'Brno' nomenclature for histone modifications, with positions referring to those used in the literature for the 'closest' model organism. Due to slight variations in histone sequences between organisms and to the presence of initiator methionine in UniProtKB/Swiss-Prot sequences, the actual positions of modified amino acids in the sequence generally differ. In this entry the following conventions are used: H2BK6ac = acetylated Lys-7; H2BK33ac = acetylated Lys-37; H2BK143ub1 = monoubiquitinated Lys-147.</text>
</comment>
<dbReference type="EMBL" id="X57312">
    <property type="protein sequence ID" value="CAA40564.1"/>
    <property type="molecule type" value="mRNA"/>
</dbReference>
<dbReference type="PIR" id="S28048">
    <property type="entry name" value="S28048"/>
</dbReference>
<dbReference type="RefSeq" id="NP_001140951.1">
    <property type="nucleotide sequence ID" value="NM_001147479.2"/>
</dbReference>
<dbReference type="SMR" id="P30755"/>
<dbReference type="STRING" id="4577.P30755"/>
<dbReference type="PaxDb" id="4577-GRMZM2G071959_P01"/>
<dbReference type="EnsemblPlants" id="Zm00001eb313690_T001">
    <property type="protein sequence ID" value="Zm00001eb313690_P001"/>
    <property type="gene ID" value="Zm00001eb313690"/>
</dbReference>
<dbReference type="GeneID" id="100273030"/>
<dbReference type="Gramene" id="Zm00001eb313690_T001">
    <property type="protein sequence ID" value="Zm00001eb313690_P001"/>
    <property type="gene ID" value="Zm00001eb313690"/>
</dbReference>
<dbReference type="KEGG" id="zma:100273030"/>
<dbReference type="MaizeGDB" id="65109"/>
<dbReference type="eggNOG" id="KOG1744">
    <property type="taxonomic scope" value="Eukaryota"/>
</dbReference>
<dbReference type="HOGENOM" id="CLU_075666_1_0_1"/>
<dbReference type="InParanoid" id="P30755"/>
<dbReference type="OMA" id="RSKENWH"/>
<dbReference type="OrthoDB" id="1914959at2759"/>
<dbReference type="Proteomes" id="UP000007305">
    <property type="component" value="Chromosome 7"/>
</dbReference>
<dbReference type="ExpressionAtlas" id="P30755">
    <property type="expression patterns" value="baseline and differential"/>
</dbReference>
<dbReference type="GO" id="GO:0000786">
    <property type="term" value="C:nucleosome"/>
    <property type="evidence" value="ECO:0007669"/>
    <property type="project" value="UniProtKB-KW"/>
</dbReference>
<dbReference type="GO" id="GO:0005634">
    <property type="term" value="C:nucleus"/>
    <property type="evidence" value="ECO:0007669"/>
    <property type="project" value="UniProtKB-SubCell"/>
</dbReference>
<dbReference type="GO" id="GO:0003677">
    <property type="term" value="F:DNA binding"/>
    <property type="evidence" value="ECO:0000318"/>
    <property type="project" value="GO_Central"/>
</dbReference>
<dbReference type="GO" id="GO:0046982">
    <property type="term" value="F:protein heterodimerization activity"/>
    <property type="evidence" value="ECO:0007669"/>
    <property type="project" value="InterPro"/>
</dbReference>
<dbReference type="GO" id="GO:0030527">
    <property type="term" value="F:structural constituent of chromatin"/>
    <property type="evidence" value="ECO:0007669"/>
    <property type="project" value="InterPro"/>
</dbReference>
<dbReference type="CDD" id="cd22910">
    <property type="entry name" value="HFD_H2B"/>
    <property type="match status" value="1"/>
</dbReference>
<dbReference type="FunFam" id="1.10.20.10:FF:000014">
    <property type="entry name" value="Histone H2B"/>
    <property type="match status" value="1"/>
</dbReference>
<dbReference type="Gene3D" id="1.10.20.10">
    <property type="entry name" value="Histone, subunit A"/>
    <property type="match status" value="1"/>
</dbReference>
<dbReference type="InterPro" id="IPR009072">
    <property type="entry name" value="Histone-fold"/>
</dbReference>
<dbReference type="InterPro" id="IPR007125">
    <property type="entry name" value="Histone_H2A/H2B/H3"/>
</dbReference>
<dbReference type="InterPro" id="IPR000558">
    <property type="entry name" value="Histone_H2B"/>
</dbReference>
<dbReference type="InterPro" id="IPR055333">
    <property type="entry name" value="HISTONE_H2B_site"/>
</dbReference>
<dbReference type="PANTHER" id="PTHR23428">
    <property type="entry name" value="HISTONE H2B"/>
    <property type="match status" value="1"/>
</dbReference>
<dbReference type="Pfam" id="PF00125">
    <property type="entry name" value="Histone"/>
    <property type="match status" value="1"/>
</dbReference>
<dbReference type="PRINTS" id="PR00621">
    <property type="entry name" value="HISTONEH2B"/>
</dbReference>
<dbReference type="SMART" id="SM00427">
    <property type="entry name" value="H2B"/>
    <property type="match status" value="1"/>
</dbReference>
<dbReference type="SUPFAM" id="SSF47113">
    <property type="entry name" value="Histone-fold"/>
    <property type="match status" value="1"/>
</dbReference>
<dbReference type="PROSITE" id="PS00357">
    <property type="entry name" value="HISTONE_H2B"/>
    <property type="match status" value="1"/>
</dbReference>
<evidence type="ECO:0000250" key="1"/>
<evidence type="ECO:0000256" key="2">
    <source>
        <dbReference type="SAM" id="MobiDB-lite"/>
    </source>
</evidence>
<evidence type="ECO:0000305" key="3"/>